<evidence type="ECO:0000255" key="1">
    <source>
        <dbReference type="HAMAP-Rule" id="MF_00605"/>
    </source>
</evidence>
<protein>
    <recommendedName>
        <fullName evidence="1">tRNA (guanine-N(1)-)-methyltransferase</fullName>
        <ecNumber evidence="1">2.1.1.228</ecNumber>
    </recommendedName>
    <alternativeName>
        <fullName evidence="1">M1G-methyltransferase</fullName>
    </alternativeName>
    <alternativeName>
        <fullName evidence="1">tRNA [GM37] methyltransferase</fullName>
    </alternativeName>
</protein>
<feature type="chain" id="PRO_1000130223" description="tRNA (guanine-N(1)-)-methyltransferase">
    <location>
        <begin position="1"/>
        <end position="249"/>
    </location>
</feature>
<feature type="binding site" evidence="1">
    <location>
        <position position="113"/>
    </location>
    <ligand>
        <name>S-adenosyl-L-methionine</name>
        <dbReference type="ChEBI" id="CHEBI:59789"/>
    </ligand>
</feature>
<feature type="binding site" evidence="1">
    <location>
        <begin position="133"/>
        <end position="138"/>
    </location>
    <ligand>
        <name>S-adenosyl-L-methionine</name>
        <dbReference type="ChEBI" id="CHEBI:59789"/>
    </ligand>
</feature>
<dbReference type="EC" id="2.1.1.228" evidence="1"/>
<dbReference type="EMBL" id="CP001139">
    <property type="protein sequence ID" value="ACH66933.1"/>
    <property type="molecule type" value="Genomic_DNA"/>
</dbReference>
<dbReference type="RefSeq" id="WP_005417802.1">
    <property type="nucleotide sequence ID" value="NC_011184.1"/>
</dbReference>
<dbReference type="SMR" id="B5FAE7"/>
<dbReference type="GeneID" id="54163200"/>
<dbReference type="KEGG" id="vfm:VFMJ11_0563"/>
<dbReference type="HOGENOM" id="CLU_047363_0_1_6"/>
<dbReference type="Proteomes" id="UP000001857">
    <property type="component" value="Chromosome I"/>
</dbReference>
<dbReference type="GO" id="GO:0005829">
    <property type="term" value="C:cytosol"/>
    <property type="evidence" value="ECO:0007669"/>
    <property type="project" value="TreeGrafter"/>
</dbReference>
<dbReference type="GO" id="GO:0052906">
    <property type="term" value="F:tRNA (guanine(37)-N1)-methyltransferase activity"/>
    <property type="evidence" value="ECO:0007669"/>
    <property type="project" value="UniProtKB-UniRule"/>
</dbReference>
<dbReference type="GO" id="GO:0002939">
    <property type="term" value="P:tRNA N1-guanine methylation"/>
    <property type="evidence" value="ECO:0007669"/>
    <property type="project" value="TreeGrafter"/>
</dbReference>
<dbReference type="CDD" id="cd18080">
    <property type="entry name" value="TrmD-like"/>
    <property type="match status" value="1"/>
</dbReference>
<dbReference type="FunFam" id="1.10.1270.20:FF:000001">
    <property type="entry name" value="tRNA (guanine-N(1)-)-methyltransferase"/>
    <property type="match status" value="1"/>
</dbReference>
<dbReference type="FunFam" id="3.40.1280.10:FF:000001">
    <property type="entry name" value="tRNA (guanine-N(1)-)-methyltransferase"/>
    <property type="match status" value="1"/>
</dbReference>
<dbReference type="Gene3D" id="3.40.1280.10">
    <property type="match status" value="1"/>
</dbReference>
<dbReference type="Gene3D" id="1.10.1270.20">
    <property type="entry name" value="tRNA(m1g37)methyltransferase, domain 2"/>
    <property type="match status" value="1"/>
</dbReference>
<dbReference type="HAMAP" id="MF_00605">
    <property type="entry name" value="TrmD"/>
    <property type="match status" value="1"/>
</dbReference>
<dbReference type="InterPro" id="IPR029028">
    <property type="entry name" value="Alpha/beta_knot_MTases"/>
</dbReference>
<dbReference type="InterPro" id="IPR023148">
    <property type="entry name" value="tRNA_m1G_MeTrfase_C_sf"/>
</dbReference>
<dbReference type="InterPro" id="IPR002649">
    <property type="entry name" value="tRNA_m1G_MeTrfase_TrmD"/>
</dbReference>
<dbReference type="InterPro" id="IPR029026">
    <property type="entry name" value="tRNA_m1G_MTases_N"/>
</dbReference>
<dbReference type="InterPro" id="IPR016009">
    <property type="entry name" value="tRNA_MeTrfase_TRMD/TRM10"/>
</dbReference>
<dbReference type="NCBIfam" id="NF000648">
    <property type="entry name" value="PRK00026.1"/>
    <property type="match status" value="1"/>
</dbReference>
<dbReference type="NCBIfam" id="TIGR00088">
    <property type="entry name" value="trmD"/>
    <property type="match status" value="1"/>
</dbReference>
<dbReference type="PANTHER" id="PTHR46417">
    <property type="entry name" value="TRNA (GUANINE-N(1)-)-METHYLTRANSFERASE"/>
    <property type="match status" value="1"/>
</dbReference>
<dbReference type="PANTHER" id="PTHR46417:SF1">
    <property type="entry name" value="TRNA (GUANINE-N(1)-)-METHYLTRANSFERASE"/>
    <property type="match status" value="1"/>
</dbReference>
<dbReference type="Pfam" id="PF01746">
    <property type="entry name" value="tRNA_m1G_MT"/>
    <property type="match status" value="1"/>
</dbReference>
<dbReference type="PIRSF" id="PIRSF000386">
    <property type="entry name" value="tRNA_mtase"/>
    <property type="match status" value="1"/>
</dbReference>
<dbReference type="SUPFAM" id="SSF75217">
    <property type="entry name" value="alpha/beta knot"/>
    <property type="match status" value="1"/>
</dbReference>
<sequence length="249" mass="27833">MWVGVISLFPEMFRSVTDFGVTSQAIKKGLLSIETWNPRDFTHDKHRTVDDRPYGGGPGMLMMVQPLRDAITAAREASPGKTKVIYLSPQGRTLNQAGVEELATNENLILICGRYEGVDERIIQSEVDEEWSIGDFVLTGGELPAMTLIDSVSRFVPGVLGDFASAEEDSFADGLLDCPHYTRPEVLDGKEVPSVLKSGNHKDIARWRMKQSLGRTWLRRPELLGNLALTDEQELLLAEFVREERQNSK</sequence>
<proteinExistence type="inferred from homology"/>
<keyword id="KW-0963">Cytoplasm</keyword>
<keyword id="KW-0489">Methyltransferase</keyword>
<keyword id="KW-0949">S-adenosyl-L-methionine</keyword>
<keyword id="KW-0808">Transferase</keyword>
<keyword id="KW-0819">tRNA processing</keyword>
<gene>
    <name evidence="1" type="primary">trmD</name>
    <name type="ordered locus">VFMJ11_0563</name>
</gene>
<organism>
    <name type="scientific">Aliivibrio fischeri (strain MJ11)</name>
    <name type="common">Vibrio fischeri</name>
    <dbReference type="NCBI Taxonomy" id="388396"/>
    <lineage>
        <taxon>Bacteria</taxon>
        <taxon>Pseudomonadati</taxon>
        <taxon>Pseudomonadota</taxon>
        <taxon>Gammaproteobacteria</taxon>
        <taxon>Vibrionales</taxon>
        <taxon>Vibrionaceae</taxon>
        <taxon>Aliivibrio</taxon>
    </lineage>
</organism>
<accession>B5FAE7</accession>
<name>TRMD_ALIFM</name>
<comment type="function">
    <text evidence="1">Specifically methylates guanosine-37 in various tRNAs.</text>
</comment>
<comment type="catalytic activity">
    <reaction evidence="1">
        <text>guanosine(37) in tRNA + S-adenosyl-L-methionine = N(1)-methylguanosine(37) in tRNA + S-adenosyl-L-homocysteine + H(+)</text>
        <dbReference type="Rhea" id="RHEA:36899"/>
        <dbReference type="Rhea" id="RHEA-COMP:10145"/>
        <dbReference type="Rhea" id="RHEA-COMP:10147"/>
        <dbReference type="ChEBI" id="CHEBI:15378"/>
        <dbReference type="ChEBI" id="CHEBI:57856"/>
        <dbReference type="ChEBI" id="CHEBI:59789"/>
        <dbReference type="ChEBI" id="CHEBI:73542"/>
        <dbReference type="ChEBI" id="CHEBI:74269"/>
        <dbReference type="EC" id="2.1.1.228"/>
    </reaction>
</comment>
<comment type="subunit">
    <text evidence="1">Homodimer.</text>
</comment>
<comment type="subcellular location">
    <subcellularLocation>
        <location evidence="1">Cytoplasm</location>
    </subcellularLocation>
</comment>
<comment type="similarity">
    <text evidence="1">Belongs to the RNA methyltransferase TrmD family.</text>
</comment>
<reference key="1">
    <citation type="submission" date="2008-08" db="EMBL/GenBank/DDBJ databases">
        <title>Complete sequence of Vibrio fischeri strain MJ11.</title>
        <authorList>
            <person name="Mandel M.J."/>
            <person name="Stabb E.V."/>
            <person name="Ruby E.G."/>
            <person name="Ferriera S."/>
            <person name="Johnson J."/>
            <person name="Kravitz S."/>
            <person name="Beeson K."/>
            <person name="Sutton G."/>
            <person name="Rogers Y.-H."/>
            <person name="Friedman R."/>
            <person name="Frazier M."/>
            <person name="Venter J.C."/>
        </authorList>
    </citation>
    <scope>NUCLEOTIDE SEQUENCE [LARGE SCALE GENOMIC DNA]</scope>
    <source>
        <strain>MJ11</strain>
    </source>
</reference>